<reference key="1">
    <citation type="journal article" date="2007" name="Genome Res.">
        <title>Genome characteristics of facultatively symbiotic Frankia sp. strains reflect host range and host plant biogeography.</title>
        <authorList>
            <person name="Normand P."/>
            <person name="Lapierre P."/>
            <person name="Tisa L.S."/>
            <person name="Gogarten J.P."/>
            <person name="Alloisio N."/>
            <person name="Bagnarol E."/>
            <person name="Bassi C.A."/>
            <person name="Berry A.M."/>
            <person name="Bickhart D.M."/>
            <person name="Choisne N."/>
            <person name="Couloux A."/>
            <person name="Cournoyer B."/>
            <person name="Cruveiller S."/>
            <person name="Daubin V."/>
            <person name="Demange N."/>
            <person name="Francino M.P."/>
            <person name="Goltsman E."/>
            <person name="Huang Y."/>
            <person name="Kopp O.R."/>
            <person name="Labarre L."/>
            <person name="Lapidus A."/>
            <person name="Lavire C."/>
            <person name="Marechal J."/>
            <person name="Martinez M."/>
            <person name="Mastronunzio J.E."/>
            <person name="Mullin B.C."/>
            <person name="Niemann J."/>
            <person name="Pujic P."/>
            <person name="Rawnsley T."/>
            <person name="Rouy Z."/>
            <person name="Schenowitz C."/>
            <person name="Sellstedt A."/>
            <person name="Tavares F."/>
            <person name="Tomkins J.P."/>
            <person name="Vallenet D."/>
            <person name="Valverde C."/>
            <person name="Wall L.G."/>
            <person name="Wang Y."/>
            <person name="Medigue C."/>
            <person name="Benson D.R."/>
        </authorList>
    </citation>
    <scope>NUCLEOTIDE SEQUENCE [LARGE SCALE GENOMIC DNA]</scope>
    <source>
        <strain>DSM 45818 / CECT 9043 / HFP020203 / CcI3</strain>
    </source>
</reference>
<proteinExistence type="inferred from homology"/>
<name>RIMO_FRACC</name>
<dbReference type="EC" id="2.8.4.4" evidence="1"/>
<dbReference type="EMBL" id="CP000249">
    <property type="protein sequence ID" value="ABD12892.1"/>
    <property type="molecule type" value="Genomic_DNA"/>
</dbReference>
<dbReference type="RefSeq" id="WP_011437916.1">
    <property type="nucleotide sequence ID" value="NZ_JENI01000092.1"/>
</dbReference>
<dbReference type="SMR" id="Q2J750"/>
<dbReference type="STRING" id="106370.Francci3_3540"/>
<dbReference type="KEGG" id="fra:Francci3_3540"/>
<dbReference type="eggNOG" id="COG0621">
    <property type="taxonomic scope" value="Bacteria"/>
</dbReference>
<dbReference type="HOGENOM" id="CLU_018697_0_1_11"/>
<dbReference type="OrthoDB" id="9805215at2"/>
<dbReference type="PhylomeDB" id="Q2J750"/>
<dbReference type="Proteomes" id="UP000001937">
    <property type="component" value="Chromosome"/>
</dbReference>
<dbReference type="GO" id="GO:0005829">
    <property type="term" value="C:cytosol"/>
    <property type="evidence" value="ECO:0007669"/>
    <property type="project" value="TreeGrafter"/>
</dbReference>
<dbReference type="GO" id="GO:0051539">
    <property type="term" value="F:4 iron, 4 sulfur cluster binding"/>
    <property type="evidence" value="ECO:0007669"/>
    <property type="project" value="UniProtKB-UniRule"/>
</dbReference>
<dbReference type="GO" id="GO:0035599">
    <property type="term" value="F:aspartic acid methylthiotransferase activity"/>
    <property type="evidence" value="ECO:0007669"/>
    <property type="project" value="TreeGrafter"/>
</dbReference>
<dbReference type="GO" id="GO:0046872">
    <property type="term" value="F:metal ion binding"/>
    <property type="evidence" value="ECO:0007669"/>
    <property type="project" value="UniProtKB-KW"/>
</dbReference>
<dbReference type="GO" id="GO:0103039">
    <property type="term" value="F:protein methylthiotransferase activity"/>
    <property type="evidence" value="ECO:0007669"/>
    <property type="project" value="UniProtKB-EC"/>
</dbReference>
<dbReference type="GO" id="GO:0006400">
    <property type="term" value="P:tRNA modification"/>
    <property type="evidence" value="ECO:0007669"/>
    <property type="project" value="InterPro"/>
</dbReference>
<dbReference type="CDD" id="cd01335">
    <property type="entry name" value="Radical_SAM"/>
    <property type="match status" value="1"/>
</dbReference>
<dbReference type="FunFam" id="3.80.30.20:FF:000001">
    <property type="entry name" value="tRNA-2-methylthio-N(6)-dimethylallyladenosine synthase 2"/>
    <property type="match status" value="1"/>
</dbReference>
<dbReference type="Gene3D" id="3.40.50.12160">
    <property type="entry name" value="Methylthiotransferase, N-terminal domain"/>
    <property type="match status" value="1"/>
</dbReference>
<dbReference type="Gene3D" id="2.40.50.140">
    <property type="entry name" value="Nucleic acid-binding proteins"/>
    <property type="match status" value="1"/>
</dbReference>
<dbReference type="Gene3D" id="3.80.30.20">
    <property type="entry name" value="tm_1862 like domain"/>
    <property type="match status" value="1"/>
</dbReference>
<dbReference type="HAMAP" id="MF_01865">
    <property type="entry name" value="MTTase_RimO"/>
    <property type="match status" value="1"/>
</dbReference>
<dbReference type="InterPro" id="IPR006638">
    <property type="entry name" value="Elp3/MiaA/NifB-like_rSAM"/>
</dbReference>
<dbReference type="InterPro" id="IPR005839">
    <property type="entry name" value="Methylthiotransferase"/>
</dbReference>
<dbReference type="InterPro" id="IPR020612">
    <property type="entry name" value="Methylthiotransferase_CS"/>
</dbReference>
<dbReference type="InterPro" id="IPR013848">
    <property type="entry name" value="Methylthiotransferase_N"/>
</dbReference>
<dbReference type="InterPro" id="IPR038135">
    <property type="entry name" value="Methylthiotransferase_N_sf"/>
</dbReference>
<dbReference type="InterPro" id="IPR012340">
    <property type="entry name" value="NA-bd_OB-fold"/>
</dbReference>
<dbReference type="InterPro" id="IPR005840">
    <property type="entry name" value="Ribosomal_uS12_MeSTrfase_RimO"/>
</dbReference>
<dbReference type="InterPro" id="IPR007197">
    <property type="entry name" value="rSAM"/>
</dbReference>
<dbReference type="InterPro" id="IPR023404">
    <property type="entry name" value="rSAM_horseshoe"/>
</dbReference>
<dbReference type="InterPro" id="IPR002792">
    <property type="entry name" value="TRAM_dom"/>
</dbReference>
<dbReference type="NCBIfam" id="TIGR00089">
    <property type="entry name" value="MiaB/RimO family radical SAM methylthiotransferase"/>
    <property type="match status" value="1"/>
</dbReference>
<dbReference type="PANTHER" id="PTHR43837">
    <property type="entry name" value="RIBOSOMAL PROTEIN S12 METHYLTHIOTRANSFERASE RIMO"/>
    <property type="match status" value="1"/>
</dbReference>
<dbReference type="PANTHER" id="PTHR43837:SF1">
    <property type="entry name" value="RIBOSOMAL PROTEIN US12 METHYLTHIOTRANSFERASE RIMO"/>
    <property type="match status" value="1"/>
</dbReference>
<dbReference type="Pfam" id="PF04055">
    <property type="entry name" value="Radical_SAM"/>
    <property type="match status" value="1"/>
</dbReference>
<dbReference type="Pfam" id="PF18693">
    <property type="entry name" value="TRAM_2"/>
    <property type="match status" value="1"/>
</dbReference>
<dbReference type="Pfam" id="PF00919">
    <property type="entry name" value="UPF0004"/>
    <property type="match status" value="1"/>
</dbReference>
<dbReference type="SFLD" id="SFLDG01082">
    <property type="entry name" value="B12-binding_domain_containing"/>
    <property type="match status" value="1"/>
</dbReference>
<dbReference type="SFLD" id="SFLDS00029">
    <property type="entry name" value="Radical_SAM"/>
    <property type="match status" value="1"/>
</dbReference>
<dbReference type="SFLD" id="SFLDF00274">
    <property type="entry name" value="ribosomal_protein_S12_methylth"/>
    <property type="match status" value="1"/>
</dbReference>
<dbReference type="SMART" id="SM00729">
    <property type="entry name" value="Elp3"/>
    <property type="match status" value="1"/>
</dbReference>
<dbReference type="SUPFAM" id="SSF102114">
    <property type="entry name" value="Radical SAM enzymes"/>
    <property type="match status" value="1"/>
</dbReference>
<dbReference type="PROSITE" id="PS51449">
    <property type="entry name" value="MTTASE_N"/>
    <property type="match status" value="1"/>
</dbReference>
<dbReference type="PROSITE" id="PS01278">
    <property type="entry name" value="MTTASE_RADICAL"/>
    <property type="match status" value="1"/>
</dbReference>
<dbReference type="PROSITE" id="PS51918">
    <property type="entry name" value="RADICAL_SAM"/>
    <property type="match status" value="1"/>
</dbReference>
<comment type="function">
    <text evidence="1">Catalyzes the methylthiolation of an aspartic acid residue of ribosomal protein uS12.</text>
</comment>
<comment type="catalytic activity">
    <reaction evidence="1">
        <text>L-aspartate(89)-[ribosomal protein uS12]-hydrogen + (sulfur carrier)-SH + AH2 + 2 S-adenosyl-L-methionine = 3-methylsulfanyl-L-aspartate(89)-[ribosomal protein uS12]-hydrogen + (sulfur carrier)-H + 5'-deoxyadenosine + L-methionine + A + S-adenosyl-L-homocysteine + 2 H(+)</text>
        <dbReference type="Rhea" id="RHEA:37087"/>
        <dbReference type="Rhea" id="RHEA-COMP:10460"/>
        <dbReference type="Rhea" id="RHEA-COMP:10461"/>
        <dbReference type="Rhea" id="RHEA-COMP:14737"/>
        <dbReference type="Rhea" id="RHEA-COMP:14739"/>
        <dbReference type="ChEBI" id="CHEBI:13193"/>
        <dbReference type="ChEBI" id="CHEBI:15378"/>
        <dbReference type="ChEBI" id="CHEBI:17319"/>
        <dbReference type="ChEBI" id="CHEBI:17499"/>
        <dbReference type="ChEBI" id="CHEBI:29917"/>
        <dbReference type="ChEBI" id="CHEBI:29961"/>
        <dbReference type="ChEBI" id="CHEBI:57844"/>
        <dbReference type="ChEBI" id="CHEBI:57856"/>
        <dbReference type="ChEBI" id="CHEBI:59789"/>
        <dbReference type="ChEBI" id="CHEBI:64428"/>
        <dbReference type="ChEBI" id="CHEBI:73599"/>
        <dbReference type="EC" id="2.8.4.4"/>
    </reaction>
</comment>
<comment type="cofactor">
    <cofactor evidence="1">
        <name>[4Fe-4S] cluster</name>
        <dbReference type="ChEBI" id="CHEBI:49883"/>
    </cofactor>
    <text evidence="1">Binds 2 [4Fe-4S] clusters. One cluster is coordinated with 3 cysteines and an exchangeable S-adenosyl-L-methionine.</text>
</comment>
<comment type="subcellular location">
    <subcellularLocation>
        <location evidence="1">Cytoplasm</location>
    </subcellularLocation>
</comment>
<comment type="similarity">
    <text evidence="1">Belongs to the methylthiotransferase family. RimO subfamily.</text>
</comment>
<keyword id="KW-0004">4Fe-4S</keyword>
<keyword id="KW-0963">Cytoplasm</keyword>
<keyword id="KW-0408">Iron</keyword>
<keyword id="KW-0411">Iron-sulfur</keyword>
<keyword id="KW-0479">Metal-binding</keyword>
<keyword id="KW-1185">Reference proteome</keyword>
<keyword id="KW-0949">S-adenosyl-L-methionine</keyword>
<keyword id="KW-0808">Transferase</keyword>
<feature type="chain" id="PRO_0000374842" description="Ribosomal protein uS12 methylthiotransferase RimO">
    <location>
        <begin position="1"/>
        <end position="523"/>
    </location>
</feature>
<feature type="domain" description="MTTase N-terminal" evidence="1">
    <location>
        <begin position="7"/>
        <end position="134"/>
    </location>
</feature>
<feature type="domain" description="Radical SAM core" evidence="2">
    <location>
        <begin position="178"/>
        <end position="409"/>
    </location>
</feature>
<feature type="domain" description="TRAM" evidence="1">
    <location>
        <begin position="411"/>
        <end position="492"/>
    </location>
</feature>
<feature type="binding site" evidence="1">
    <location>
        <position position="16"/>
    </location>
    <ligand>
        <name>[4Fe-4S] cluster</name>
        <dbReference type="ChEBI" id="CHEBI:49883"/>
        <label>1</label>
    </ligand>
</feature>
<feature type="binding site" evidence="1">
    <location>
        <position position="52"/>
    </location>
    <ligand>
        <name>[4Fe-4S] cluster</name>
        <dbReference type="ChEBI" id="CHEBI:49883"/>
        <label>1</label>
    </ligand>
</feature>
<feature type="binding site" evidence="1">
    <location>
        <position position="97"/>
    </location>
    <ligand>
        <name>[4Fe-4S] cluster</name>
        <dbReference type="ChEBI" id="CHEBI:49883"/>
        <label>1</label>
    </ligand>
</feature>
<feature type="binding site" evidence="1">
    <location>
        <position position="192"/>
    </location>
    <ligand>
        <name>[4Fe-4S] cluster</name>
        <dbReference type="ChEBI" id="CHEBI:49883"/>
        <label>2</label>
        <note>4Fe-4S-S-AdoMet</note>
    </ligand>
</feature>
<feature type="binding site" evidence="1">
    <location>
        <position position="196"/>
    </location>
    <ligand>
        <name>[4Fe-4S] cluster</name>
        <dbReference type="ChEBI" id="CHEBI:49883"/>
        <label>2</label>
        <note>4Fe-4S-S-AdoMet</note>
    </ligand>
</feature>
<feature type="binding site" evidence="1">
    <location>
        <position position="199"/>
    </location>
    <ligand>
        <name>[4Fe-4S] cluster</name>
        <dbReference type="ChEBI" id="CHEBI:49883"/>
        <label>2</label>
        <note>4Fe-4S-S-AdoMet</note>
    </ligand>
</feature>
<accession>Q2J750</accession>
<sequence length="523" mass="54284">MSTRLHRRVALITLGCSRNEVDSEELAARLGADGWELVSDAADADAVLVNTCGFVDAAKKDSIDALLAADGLRAGGGPSGPADGAGPGPRAVVAVGCLAERYGTELAESLPEADAVLGFDAYPNIATHLAAVLAGTPVPAHSPRDRRTMLPITPVDRAAPALPPAAVSTGAVPLRRRLTAGPVAVLKISSGCDRRCAFCAIPSFRGSHVSRSPDDVLAEAEWLAGQGARELVLVSENSTSYGKDLGDLRALEKLLPQLAAVSGIVRVRTVYLQPAEMRPSLLEVLLTTPGLAPYLDLSFQHASPPVLRRMRRFGGSGHFLDLLARARALAPELGARSNVIVGFPGETPEDVDILAEFLEAAELDAVGVFGYSDEEGTEAAGLTDKIPDELIERRRVRVTDLVEQLTAARADARIGSRVQVLVEEVAGGLATGCAAHQQAEVDGGCVVRLSPGGAADDGPERLGVGDLVGVGDLVEARVVATEGVDLIAEFIAVLDRARPTAAVARPTPDRAAALVGRGVADGT</sequence>
<gene>
    <name evidence="1" type="primary">rimO</name>
    <name type="ordered locus">Francci3_3540</name>
</gene>
<evidence type="ECO:0000255" key="1">
    <source>
        <dbReference type="HAMAP-Rule" id="MF_01865"/>
    </source>
</evidence>
<evidence type="ECO:0000255" key="2">
    <source>
        <dbReference type="PROSITE-ProRule" id="PRU01266"/>
    </source>
</evidence>
<organism>
    <name type="scientific">Frankia casuarinae (strain DSM 45818 / CECT 9043 / HFP020203 / CcI3)</name>
    <dbReference type="NCBI Taxonomy" id="106370"/>
    <lineage>
        <taxon>Bacteria</taxon>
        <taxon>Bacillati</taxon>
        <taxon>Actinomycetota</taxon>
        <taxon>Actinomycetes</taxon>
        <taxon>Frankiales</taxon>
        <taxon>Frankiaceae</taxon>
        <taxon>Frankia</taxon>
    </lineage>
</organism>
<protein>
    <recommendedName>
        <fullName evidence="1">Ribosomal protein uS12 methylthiotransferase RimO</fullName>
        <shortName evidence="1">uS12 MTTase</shortName>
        <shortName evidence="1">uS12 methylthiotransferase</shortName>
        <ecNumber evidence="1">2.8.4.4</ecNumber>
    </recommendedName>
    <alternativeName>
        <fullName evidence="1">Ribosomal protein uS12 (aspartate-C(3))-methylthiotransferase</fullName>
    </alternativeName>
    <alternativeName>
        <fullName evidence="1">Ribosome maturation factor RimO</fullName>
    </alternativeName>
</protein>